<organism>
    <name type="scientific">Pseudomonas fluorescens (strain ATCC BAA-477 / NRRL B-23932 / Pf-5)</name>
    <dbReference type="NCBI Taxonomy" id="220664"/>
    <lineage>
        <taxon>Bacteria</taxon>
        <taxon>Pseudomonadati</taxon>
        <taxon>Pseudomonadota</taxon>
        <taxon>Gammaproteobacteria</taxon>
        <taxon>Pseudomonadales</taxon>
        <taxon>Pseudomonadaceae</taxon>
        <taxon>Pseudomonas</taxon>
    </lineage>
</organism>
<proteinExistence type="inferred from homology"/>
<feature type="chain" id="PRO_1000018938" description="Bifunctional purine biosynthesis protein PurH">
    <location>
        <begin position="1"/>
        <end position="535"/>
    </location>
</feature>
<feature type="domain" description="MGS-like" evidence="2">
    <location>
        <begin position="6"/>
        <end position="151"/>
    </location>
</feature>
<sequence length="535" mass="57307">MTDQTTRLPIRRALISVSDKTGILEFAKELEALGVEILSTGGTFKLLQDNGVSAVEVADYTGFAEMMDGRVKTLHPKIHGGILGRRGIDDAIMNEHGIKPIDLVAVNLYPFEATINKPGCDLPTAIENIDIGGPTMVRSAAKNHKDVAIVVNASDYAGVLESLKAGGLTYAQRFDLMLKAFEHTAAYDGMIANYMGTVNQAAETLSTSGRSEFPRTFNSQFIKAQEMRYGENPHQSAAFYVEAKPAEVGIATATQLQGKELSYNNVADTDAALECVKSFVKPACVIVKHANPCGVAVSPDAEGGIRQAYELAYATDTESAFGGIIAFNRELDAATAKAIVERQFVEVIIAPSVSEEARAIVAAKANVRLLACGQWSAERAAAWDYKRVNGGLLVQSRDIGMISADDLKVVTKRAPTEQEINDLIFAWKVAKYVKSNAIVYAKNRQTIGVGAGQMSRVNSARIAAIKAEHAGLQVAGSVMASDAFFPFRDGLDNAAKVGITAVIQPGGSMRDNEVIAAADEAGIAMVFTGMRHFRH</sequence>
<name>PUR9_PSEF5</name>
<dbReference type="EC" id="2.1.2.3" evidence="1"/>
<dbReference type="EC" id="3.5.4.10" evidence="1"/>
<dbReference type="EMBL" id="CP000076">
    <property type="protein sequence ID" value="AAY96073.1"/>
    <property type="molecule type" value="Genomic_DNA"/>
</dbReference>
<dbReference type="RefSeq" id="WP_011059036.1">
    <property type="nucleotide sequence ID" value="NC_004129.6"/>
</dbReference>
<dbReference type="SMR" id="Q4KIX5"/>
<dbReference type="STRING" id="220664.PFL_0666"/>
<dbReference type="GeneID" id="57473658"/>
<dbReference type="KEGG" id="pfl:PFL_0666"/>
<dbReference type="PATRIC" id="fig|220664.5.peg.686"/>
<dbReference type="eggNOG" id="COG0138">
    <property type="taxonomic scope" value="Bacteria"/>
</dbReference>
<dbReference type="HOGENOM" id="CLU_016316_5_2_6"/>
<dbReference type="UniPathway" id="UPA00074">
    <property type="reaction ID" value="UER00133"/>
</dbReference>
<dbReference type="UniPathway" id="UPA00074">
    <property type="reaction ID" value="UER00135"/>
</dbReference>
<dbReference type="Proteomes" id="UP000008540">
    <property type="component" value="Chromosome"/>
</dbReference>
<dbReference type="GO" id="GO:0005829">
    <property type="term" value="C:cytosol"/>
    <property type="evidence" value="ECO:0007669"/>
    <property type="project" value="TreeGrafter"/>
</dbReference>
<dbReference type="GO" id="GO:0003937">
    <property type="term" value="F:IMP cyclohydrolase activity"/>
    <property type="evidence" value="ECO:0007669"/>
    <property type="project" value="UniProtKB-UniRule"/>
</dbReference>
<dbReference type="GO" id="GO:0004643">
    <property type="term" value="F:phosphoribosylaminoimidazolecarboxamide formyltransferase activity"/>
    <property type="evidence" value="ECO:0007669"/>
    <property type="project" value="UniProtKB-UniRule"/>
</dbReference>
<dbReference type="GO" id="GO:0006189">
    <property type="term" value="P:'de novo' IMP biosynthetic process"/>
    <property type="evidence" value="ECO:0007669"/>
    <property type="project" value="UniProtKB-UniRule"/>
</dbReference>
<dbReference type="CDD" id="cd01421">
    <property type="entry name" value="IMPCH"/>
    <property type="match status" value="1"/>
</dbReference>
<dbReference type="FunFam" id="3.40.140.20:FF:000001">
    <property type="entry name" value="Bifunctional purine biosynthesis protein PurH"/>
    <property type="match status" value="1"/>
</dbReference>
<dbReference type="FunFam" id="3.40.140.20:FF:000002">
    <property type="entry name" value="Bifunctional purine biosynthesis protein PurH"/>
    <property type="match status" value="1"/>
</dbReference>
<dbReference type="FunFam" id="3.40.50.1380:FF:000001">
    <property type="entry name" value="Bifunctional purine biosynthesis protein PurH"/>
    <property type="match status" value="1"/>
</dbReference>
<dbReference type="Gene3D" id="3.40.140.20">
    <property type="match status" value="2"/>
</dbReference>
<dbReference type="Gene3D" id="3.40.50.1380">
    <property type="entry name" value="Methylglyoxal synthase-like domain"/>
    <property type="match status" value="1"/>
</dbReference>
<dbReference type="HAMAP" id="MF_00139">
    <property type="entry name" value="PurH"/>
    <property type="match status" value="1"/>
</dbReference>
<dbReference type="InterPro" id="IPR024051">
    <property type="entry name" value="AICAR_Tfase_dup_dom_sf"/>
</dbReference>
<dbReference type="InterPro" id="IPR016193">
    <property type="entry name" value="Cytidine_deaminase-like"/>
</dbReference>
<dbReference type="InterPro" id="IPR011607">
    <property type="entry name" value="MGS-like_dom"/>
</dbReference>
<dbReference type="InterPro" id="IPR036914">
    <property type="entry name" value="MGS-like_dom_sf"/>
</dbReference>
<dbReference type="InterPro" id="IPR002695">
    <property type="entry name" value="PurH-like"/>
</dbReference>
<dbReference type="NCBIfam" id="NF002049">
    <property type="entry name" value="PRK00881.1"/>
    <property type="match status" value="1"/>
</dbReference>
<dbReference type="NCBIfam" id="TIGR00355">
    <property type="entry name" value="purH"/>
    <property type="match status" value="1"/>
</dbReference>
<dbReference type="PANTHER" id="PTHR11692:SF0">
    <property type="entry name" value="BIFUNCTIONAL PURINE BIOSYNTHESIS PROTEIN ATIC"/>
    <property type="match status" value="1"/>
</dbReference>
<dbReference type="PANTHER" id="PTHR11692">
    <property type="entry name" value="BIFUNCTIONAL PURINE BIOSYNTHESIS PROTEIN PURH"/>
    <property type="match status" value="1"/>
</dbReference>
<dbReference type="Pfam" id="PF01808">
    <property type="entry name" value="AICARFT_IMPCHas"/>
    <property type="match status" value="1"/>
</dbReference>
<dbReference type="Pfam" id="PF02142">
    <property type="entry name" value="MGS"/>
    <property type="match status" value="1"/>
</dbReference>
<dbReference type="PIRSF" id="PIRSF000414">
    <property type="entry name" value="AICARFT_IMPCHas"/>
    <property type="match status" value="1"/>
</dbReference>
<dbReference type="SMART" id="SM00798">
    <property type="entry name" value="AICARFT_IMPCHas"/>
    <property type="match status" value="1"/>
</dbReference>
<dbReference type="SMART" id="SM00851">
    <property type="entry name" value="MGS"/>
    <property type="match status" value="1"/>
</dbReference>
<dbReference type="SUPFAM" id="SSF53927">
    <property type="entry name" value="Cytidine deaminase-like"/>
    <property type="match status" value="1"/>
</dbReference>
<dbReference type="SUPFAM" id="SSF52335">
    <property type="entry name" value="Methylglyoxal synthase-like"/>
    <property type="match status" value="1"/>
</dbReference>
<dbReference type="PROSITE" id="PS51855">
    <property type="entry name" value="MGS"/>
    <property type="match status" value="1"/>
</dbReference>
<keyword id="KW-0378">Hydrolase</keyword>
<keyword id="KW-0511">Multifunctional enzyme</keyword>
<keyword id="KW-0658">Purine biosynthesis</keyword>
<keyword id="KW-0808">Transferase</keyword>
<evidence type="ECO:0000255" key="1">
    <source>
        <dbReference type="HAMAP-Rule" id="MF_00139"/>
    </source>
</evidence>
<evidence type="ECO:0000255" key="2">
    <source>
        <dbReference type="PROSITE-ProRule" id="PRU01202"/>
    </source>
</evidence>
<reference key="1">
    <citation type="journal article" date="2005" name="Nat. Biotechnol.">
        <title>Complete genome sequence of the plant commensal Pseudomonas fluorescens Pf-5.</title>
        <authorList>
            <person name="Paulsen I.T."/>
            <person name="Press C.M."/>
            <person name="Ravel J."/>
            <person name="Kobayashi D.Y."/>
            <person name="Myers G.S.A."/>
            <person name="Mavrodi D.V."/>
            <person name="DeBoy R.T."/>
            <person name="Seshadri R."/>
            <person name="Ren Q."/>
            <person name="Madupu R."/>
            <person name="Dodson R.J."/>
            <person name="Durkin A.S."/>
            <person name="Brinkac L.M."/>
            <person name="Daugherty S.C."/>
            <person name="Sullivan S.A."/>
            <person name="Rosovitz M.J."/>
            <person name="Gwinn M.L."/>
            <person name="Zhou L."/>
            <person name="Schneider D.J."/>
            <person name="Cartinhour S.W."/>
            <person name="Nelson W.C."/>
            <person name="Weidman J."/>
            <person name="Watkins K."/>
            <person name="Tran K."/>
            <person name="Khouri H."/>
            <person name="Pierson E.A."/>
            <person name="Pierson L.S. III"/>
            <person name="Thomashow L.S."/>
            <person name="Loper J.E."/>
        </authorList>
    </citation>
    <scope>NUCLEOTIDE SEQUENCE [LARGE SCALE GENOMIC DNA]</scope>
    <source>
        <strain>ATCC BAA-477 / NRRL B-23932 / Pf-5</strain>
    </source>
</reference>
<protein>
    <recommendedName>
        <fullName evidence="1">Bifunctional purine biosynthesis protein PurH</fullName>
    </recommendedName>
    <domain>
        <recommendedName>
            <fullName evidence="1">Phosphoribosylaminoimidazolecarboxamide formyltransferase</fullName>
            <ecNumber evidence="1">2.1.2.3</ecNumber>
        </recommendedName>
        <alternativeName>
            <fullName evidence="1">AICAR transformylase</fullName>
        </alternativeName>
    </domain>
    <domain>
        <recommendedName>
            <fullName evidence="1">IMP cyclohydrolase</fullName>
            <ecNumber evidence="1">3.5.4.10</ecNumber>
        </recommendedName>
        <alternativeName>
            <fullName evidence="1">ATIC</fullName>
        </alternativeName>
        <alternativeName>
            <fullName evidence="1">IMP synthase</fullName>
        </alternativeName>
        <alternativeName>
            <fullName evidence="1">Inosinicase</fullName>
        </alternativeName>
    </domain>
</protein>
<accession>Q4KIX5</accession>
<gene>
    <name evidence="1" type="primary">purH</name>
    <name type="ordered locus">PFL_0666</name>
</gene>
<comment type="catalytic activity">
    <reaction evidence="1">
        <text>(6R)-10-formyltetrahydrofolate + 5-amino-1-(5-phospho-beta-D-ribosyl)imidazole-4-carboxamide = 5-formamido-1-(5-phospho-D-ribosyl)imidazole-4-carboxamide + (6S)-5,6,7,8-tetrahydrofolate</text>
        <dbReference type="Rhea" id="RHEA:22192"/>
        <dbReference type="ChEBI" id="CHEBI:57453"/>
        <dbReference type="ChEBI" id="CHEBI:58467"/>
        <dbReference type="ChEBI" id="CHEBI:58475"/>
        <dbReference type="ChEBI" id="CHEBI:195366"/>
        <dbReference type="EC" id="2.1.2.3"/>
    </reaction>
</comment>
<comment type="catalytic activity">
    <reaction evidence="1">
        <text>IMP + H2O = 5-formamido-1-(5-phospho-D-ribosyl)imidazole-4-carboxamide</text>
        <dbReference type="Rhea" id="RHEA:18445"/>
        <dbReference type="ChEBI" id="CHEBI:15377"/>
        <dbReference type="ChEBI" id="CHEBI:58053"/>
        <dbReference type="ChEBI" id="CHEBI:58467"/>
        <dbReference type="EC" id="3.5.4.10"/>
    </reaction>
</comment>
<comment type="pathway">
    <text evidence="1">Purine metabolism; IMP biosynthesis via de novo pathway; 5-formamido-1-(5-phospho-D-ribosyl)imidazole-4-carboxamide from 5-amino-1-(5-phospho-D-ribosyl)imidazole-4-carboxamide (10-formyl THF route): step 1/1.</text>
</comment>
<comment type="pathway">
    <text evidence="1">Purine metabolism; IMP biosynthesis via de novo pathway; IMP from 5-formamido-1-(5-phospho-D-ribosyl)imidazole-4-carboxamide: step 1/1.</text>
</comment>
<comment type="domain">
    <text evidence="1">The IMP cyclohydrolase activity resides in the N-terminal region.</text>
</comment>
<comment type="similarity">
    <text evidence="1">Belongs to the PurH family.</text>
</comment>